<organism>
    <name type="scientific">Methanococcus maripaludis (strain C7 / ATCC BAA-1331)</name>
    <dbReference type="NCBI Taxonomy" id="426368"/>
    <lineage>
        <taxon>Archaea</taxon>
        <taxon>Methanobacteriati</taxon>
        <taxon>Methanobacteriota</taxon>
        <taxon>Methanomada group</taxon>
        <taxon>Methanococci</taxon>
        <taxon>Methanococcales</taxon>
        <taxon>Methanococcaceae</taxon>
        <taxon>Methanococcus</taxon>
    </lineage>
</organism>
<gene>
    <name type="ordered locus">MmarC7_0329</name>
</gene>
<keyword id="KW-0012">Acyltransferase</keyword>
<keyword id="KW-0511">Multifunctional enzyme</keyword>
<keyword id="KW-0548">Nucleotidyltransferase</keyword>
<keyword id="KW-0677">Repeat</keyword>
<keyword id="KW-0808">Transferase</keyword>
<evidence type="ECO:0000250" key="1"/>
<evidence type="ECO:0000305" key="2"/>
<name>GLMU_METM7</name>
<sequence>MDAIILCAGKGTRLYPITESRPKPMIPIAGKPILEHIIEKIENYVEKIYLVVGFEKEKIIEYFKENPKIEYILQEKQLGTGHAVLTAKNFIKDDFLVLNGDIIFEDSIDEILVYENAVALSKVGHPENFGVVELGYDNKIINLLEKPKKEELPSNLINAGIYKLQNNVFDILENLVPSERGEIELTDALKKLIENGKLHGIELNGYWNDIGHPWDVLSANNRFLNKIISKVSGKIENNVSITGNVIIEEGAVIKPNSVIEGPVIIKSGSIVGPLAYIRPNTVLMENTFVGNSSEIKGSIILENTKIPHLSYVGDSIIGANCNFGCNTITANLRFDDKPVMVNIKGKPVKSVRKLGAIIGDNVKTGIQVSFMPGVKIGSNSLIGANCLIDNDIEQNSFVYKKDELVITKKRN</sequence>
<accession>A6VG23</accession>
<proteinExistence type="inferred from homology"/>
<dbReference type="EC" id="2.7.7.23"/>
<dbReference type="EC" id="2.3.1.157"/>
<dbReference type="EMBL" id="CP000745">
    <property type="protein sequence ID" value="ABR65399.1"/>
    <property type="molecule type" value="Genomic_DNA"/>
</dbReference>
<dbReference type="SMR" id="A6VG23"/>
<dbReference type="STRING" id="426368.MmarC7_0329"/>
<dbReference type="KEGG" id="mmz:MmarC7_0329"/>
<dbReference type="eggNOG" id="arCOG00666">
    <property type="taxonomic scope" value="Archaea"/>
</dbReference>
<dbReference type="HOGENOM" id="CLU_029499_0_1_2"/>
<dbReference type="OrthoDB" id="15372at2157"/>
<dbReference type="UniPathway" id="UPA00113">
    <property type="reaction ID" value="UER00532"/>
</dbReference>
<dbReference type="UniPathway" id="UPA00113">
    <property type="reaction ID" value="UER00533"/>
</dbReference>
<dbReference type="GO" id="GO:0019134">
    <property type="term" value="F:glucosamine-1-phosphate N-acetyltransferase activity"/>
    <property type="evidence" value="ECO:0007669"/>
    <property type="project" value="UniProtKB-EC"/>
</dbReference>
<dbReference type="GO" id="GO:0003977">
    <property type="term" value="F:UDP-N-acetylglucosamine diphosphorylase activity"/>
    <property type="evidence" value="ECO:0007669"/>
    <property type="project" value="UniProtKB-EC"/>
</dbReference>
<dbReference type="GO" id="GO:0006048">
    <property type="term" value="P:UDP-N-acetylglucosamine biosynthetic process"/>
    <property type="evidence" value="ECO:0007669"/>
    <property type="project" value="UniProtKB-UniPathway"/>
</dbReference>
<dbReference type="CDD" id="cd05636">
    <property type="entry name" value="LbH_G1P_TT_C_like"/>
    <property type="match status" value="1"/>
</dbReference>
<dbReference type="CDD" id="cd04181">
    <property type="entry name" value="NTP_transferase"/>
    <property type="match status" value="1"/>
</dbReference>
<dbReference type="Gene3D" id="2.160.10.10">
    <property type="entry name" value="Hexapeptide repeat proteins"/>
    <property type="match status" value="1"/>
</dbReference>
<dbReference type="Gene3D" id="3.90.550.10">
    <property type="entry name" value="Spore Coat Polysaccharide Biosynthesis Protein SpsA, Chain A"/>
    <property type="match status" value="1"/>
</dbReference>
<dbReference type="InterPro" id="IPR023915">
    <property type="entry name" value="Bifunctiontional_GlmU_arc-type"/>
</dbReference>
<dbReference type="InterPro" id="IPR050065">
    <property type="entry name" value="GlmU-like"/>
</dbReference>
<dbReference type="InterPro" id="IPR001451">
    <property type="entry name" value="Hexapep"/>
</dbReference>
<dbReference type="InterPro" id="IPR005835">
    <property type="entry name" value="NTP_transferase_dom"/>
</dbReference>
<dbReference type="InterPro" id="IPR029044">
    <property type="entry name" value="Nucleotide-diphossugar_trans"/>
</dbReference>
<dbReference type="InterPro" id="IPR011004">
    <property type="entry name" value="Trimer_LpxA-like_sf"/>
</dbReference>
<dbReference type="NCBIfam" id="TIGR03992">
    <property type="entry name" value="Arch_glmU"/>
    <property type="match status" value="1"/>
</dbReference>
<dbReference type="PANTHER" id="PTHR43584:SF8">
    <property type="entry name" value="N-ACETYLMURAMATE ALPHA-1-PHOSPHATE URIDYLYLTRANSFERASE"/>
    <property type="match status" value="1"/>
</dbReference>
<dbReference type="PANTHER" id="PTHR43584">
    <property type="entry name" value="NUCLEOTIDYL TRANSFERASE"/>
    <property type="match status" value="1"/>
</dbReference>
<dbReference type="Pfam" id="PF00132">
    <property type="entry name" value="Hexapep"/>
    <property type="match status" value="1"/>
</dbReference>
<dbReference type="Pfam" id="PF00483">
    <property type="entry name" value="NTP_transferase"/>
    <property type="match status" value="1"/>
</dbReference>
<dbReference type="SUPFAM" id="SSF53448">
    <property type="entry name" value="Nucleotide-diphospho-sugar transferases"/>
    <property type="match status" value="1"/>
</dbReference>
<dbReference type="SUPFAM" id="SSF51161">
    <property type="entry name" value="Trimeric LpxA-like enzymes"/>
    <property type="match status" value="1"/>
</dbReference>
<reference key="1">
    <citation type="submission" date="2007-06" db="EMBL/GenBank/DDBJ databases">
        <title>Complete sequence of Methanococcus maripaludis C7.</title>
        <authorList>
            <consortium name="US DOE Joint Genome Institute"/>
            <person name="Copeland A."/>
            <person name="Lucas S."/>
            <person name="Lapidus A."/>
            <person name="Barry K."/>
            <person name="Glavina del Rio T."/>
            <person name="Dalin E."/>
            <person name="Tice H."/>
            <person name="Pitluck S."/>
            <person name="Clum A."/>
            <person name="Schmutz J."/>
            <person name="Larimer F."/>
            <person name="Land M."/>
            <person name="Hauser L."/>
            <person name="Kyrpides N."/>
            <person name="Anderson I."/>
            <person name="Sieprawska-Lupa M."/>
            <person name="Whitman W.B."/>
            <person name="Richardson P."/>
        </authorList>
    </citation>
    <scope>NUCLEOTIDE SEQUENCE [LARGE SCALE GENOMIC DNA]</scope>
    <source>
        <strain>C7 / ATCC BAA-1331</strain>
    </source>
</reference>
<comment type="function">
    <text evidence="1">Catalyzes the last two sequential reactions in the de novo biosynthetic pathway for UDP-N-acetyl-glucosamine (UDP-GlcNAc). Responsible for the acetylation of GlcN-1-P to GlcNAc-1-P, and for the uridyl transfer from UTP to GlcNAc-1-P, to produce UDP-GlcNAc and pyrophosphate (By similarity).</text>
</comment>
<comment type="catalytic activity">
    <reaction>
        <text>N-acetyl-alpha-D-glucosamine 1-phosphate + UTP + H(+) = UDP-N-acetyl-alpha-D-glucosamine + diphosphate</text>
        <dbReference type="Rhea" id="RHEA:13509"/>
        <dbReference type="ChEBI" id="CHEBI:15378"/>
        <dbReference type="ChEBI" id="CHEBI:33019"/>
        <dbReference type="ChEBI" id="CHEBI:46398"/>
        <dbReference type="ChEBI" id="CHEBI:57705"/>
        <dbReference type="ChEBI" id="CHEBI:57776"/>
        <dbReference type="EC" id="2.7.7.23"/>
    </reaction>
</comment>
<comment type="catalytic activity">
    <reaction>
        <text>alpha-D-glucosamine 1-phosphate + acetyl-CoA = N-acetyl-alpha-D-glucosamine 1-phosphate + CoA + H(+)</text>
        <dbReference type="Rhea" id="RHEA:13725"/>
        <dbReference type="ChEBI" id="CHEBI:15378"/>
        <dbReference type="ChEBI" id="CHEBI:57287"/>
        <dbReference type="ChEBI" id="CHEBI:57288"/>
        <dbReference type="ChEBI" id="CHEBI:57776"/>
        <dbReference type="ChEBI" id="CHEBI:58516"/>
        <dbReference type="EC" id="2.3.1.157"/>
    </reaction>
</comment>
<comment type="pathway">
    <text>Nucleotide-sugar biosynthesis; UDP-N-acetyl-alpha-D-glucosamine biosynthesis; N-acetyl-alpha-D-glucosamine 1-phosphate from alpha-D-glucosamine 6-phosphate (route II): step 2/2.</text>
</comment>
<comment type="pathway">
    <text>Nucleotide-sugar biosynthesis; UDP-N-acetyl-alpha-D-glucosamine biosynthesis; UDP-N-acetyl-alpha-D-glucosamine from N-acetyl-alpha-D-glucosamine 1-phosphate: step 1/1.</text>
</comment>
<comment type="similarity">
    <text evidence="2">In the N-terminal section; belongs to the N-acetylglucosamine-1-phosphate uridyltransferase family.</text>
</comment>
<comment type="similarity">
    <text evidence="2">In the C-terminal section; belongs to the transferase hexapeptide repeat family.</text>
</comment>
<protein>
    <recommendedName>
        <fullName>Bifunctional protein GlmU</fullName>
    </recommendedName>
    <domain>
        <recommendedName>
            <fullName>UDP-N-acetylglucosamine pyrophosphorylase</fullName>
            <ecNumber>2.7.7.23</ecNumber>
        </recommendedName>
        <alternativeName>
            <fullName>N-acetylglucosamine-1-phosphate uridyltransferase</fullName>
        </alternativeName>
    </domain>
    <domain>
        <recommendedName>
            <fullName>Glucosamine-1-phosphate N-acetyltransferase</fullName>
            <ecNumber>2.3.1.157</ecNumber>
        </recommendedName>
    </domain>
</protein>
<feature type="chain" id="PRO_0000337830" description="Bifunctional protein GlmU">
    <location>
        <begin position="1"/>
        <end position="411"/>
    </location>
</feature>
<feature type="region of interest" description="Pyrophosphorylase">
    <location>
        <begin position="1"/>
        <end position="204"/>
    </location>
</feature>
<feature type="region of interest" description="Linker">
    <location>
        <begin position="205"/>
        <end position="224"/>
    </location>
</feature>
<feature type="region of interest" description="N-acetyltransferase">
    <location>
        <begin position="225"/>
        <end position="411"/>
    </location>
</feature>
<feature type="active site" description="Proton acceptor" evidence="1">
    <location>
        <position position="308"/>
    </location>
</feature>
<feature type="binding site" evidence="1">
    <location>
        <begin position="6"/>
        <end position="9"/>
    </location>
    <ligand>
        <name>UTP</name>
        <dbReference type="ChEBI" id="CHEBI:46398"/>
    </ligand>
</feature>
<feature type="binding site" evidence="1">
    <location>
        <position position="74"/>
    </location>
    <ligand>
        <name>UTP</name>
        <dbReference type="ChEBI" id="CHEBI:46398"/>
    </ligand>
</feature>
<feature type="binding site" evidence="1">
    <location>
        <position position="79"/>
    </location>
    <ligand>
        <name>UTP</name>
        <dbReference type="ChEBI" id="CHEBI:46398"/>
    </ligand>
</feature>
<feature type="binding site" evidence="1">
    <location>
        <position position="80"/>
    </location>
    <ligand>
        <name>N-acetyl-alpha-D-glucosamine 1-phosphate</name>
        <dbReference type="ChEBI" id="CHEBI:57776"/>
    </ligand>
</feature>
<feature type="binding site" evidence="1">
    <location>
        <position position="130"/>
    </location>
    <ligand>
        <name>N-acetyl-alpha-D-glucosamine 1-phosphate</name>
        <dbReference type="ChEBI" id="CHEBI:57776"/>
    </ligand>
</feature>
<feature type="binding site" evidence="1">
    <location>
        <position position="142"/>
    </location>
    <ligand>
        <name>N-acetyl-alpha-D-glucosamine 1-phosphate</name>
        <dbReference type="ChEBI" id="CHEBI:57776"/>
    </ligand>
</feature>
<feature type="binding site" evidence="1">
    <location>
        <position position="158"/>
    </location>
    <ligand>
        <name>N-acetyl-alpha-D-glucosamine 1-phosphate</name>
        <dbReference type="ChEBI" id="CHEBI:57776"/>
    </ligand>
</feature>
<feature type="binding site" evidence="1">
    <location>
        <position position="384"/>
    </location>
    <ligand>
        <name>acetyl-CoA</name>
        <dbReference type="ChEBI" id="CHEBI:57288"/>
    </ligand>
</feature>
<feature type="binding site" evidence="1">
    <location>
        <position position="401"/>
    </location>
    <ligand>
        <name>acetyl-CoA</name>
        <dbReference type="ChEBI" id="CHEBI:57288"/>
    </ligand>
</feature>